<keyword id="KW-0058">Aromatic hydrocarbons catabolism</keyword>
<keyword id="KW-0614">Plasmid</keyword>
<reference key="1">
    <citation type="journal article" date="1994" name="J. Bacteriol.">
        <title>Organization and evolution of naphthalene catabolic pathways: sequence of the DNA encoding 2-hydroxychromene-2-carboxylate isomerase and trans-o-hydroxybenzylidenepyruvate hydratase-aldolase from the NAH7 plasmid.</title>
        <authorList>
            <person name="Eaton R.W."/>
        </authorList>
    </citation>
    <scope>NUCLEOTIDE SEQUENCE [GENOMIC DNA]</scope>
    <source>
        <strain>ATCC 17485 / DSM 50208 / JCM 6158 / NCIMB 12092 / Stanier 111 / Biotype A</strain>
    </source>
</reference>
<comment type="function">
    <text>May be involved in the conversion of 2-hydroxy-4-(2'-oxo-3,5-cyclohexadienyl)-buta-2,4-dienoate to cis-O-hydroxybenzylidenepyruvate. DoxH and DoxJ encode different enzymes that may have interchangeable functions.</text>
</comment>
<comment type="pathway">
    <text>Aromatic compound metabolism; naphthalene degradation.</text>
</comment>
<organism>
    <name type="scientific">Pseudomonas putida</name>
    <name type="common">Arthrobacter siderocapsulatus</name>
    <dbReference type="NCBI Taxonomy" id="303"/>
    <lineage>
        <taxon>Bacteria</taxon>
        <taxon>Pseudomonadati</taxon>
        <taxon>Pseudomonadota</taxon>
        <taxon>Gammaproteobacteria</taxon>
        <taxon>Pseudomonadales</taxon>
        <taxon>Pseudomonadaceae</taxon>
        <taxon>Pseudomonas</taxon>
    </lineage>
</organism>
<dbReference type="EMBL" id="U09057">
    <property type="protein sequence ID" value="AAA66356.1"/>
    <property type="molecule type" value="Genomic_DNA"/>
</dbReference>
<dbReference type="PIR" id="A55552">
    <property type="entry name" value="A55552"/>
</dbReference>
<dbReference type="SMR" id="Q51946"/>
<dbReference type="UniPathway" id="UPA00082"/>
<dbReference type="GO" id="GO:0019867">
    <property type="term" value="C:outer membrane"/>
    <property type="evidence" value="ECO:0007669"/>
    <property type="project" value="InterPro"/>
</dbReference>
<dbReference type="GO" id="GO:0009056">
    <property type="term" value="P:catabolic process"/>
    <property type="evidence" value="ECO:0007669"/>
    <property type="project" value="UniProtKB-KW"/>
</dbReference>
<dbReference type="Gene3D" id="2.40.160.20">
    <property type="match status" value="1"/>
</dbReference>
<dbReference type="InterPro" id="IPR005618">
    <property type="entry name" value="OMPW"/>
</dbReference>
<dbReference type="Pfam" id="PF03922">
    <property type="entry name" value="OmpW"/>
    <property type="match status" value="1"/>
</dbReference>
<geneLocation type="plasmid">
    <name>NAH7</name>
</geneLocation>
<name>NAHQ_PSEPU</name>
<accession>Q51946</accession>
<sequence>ADIDVSRNWFVSIDIRKLYLKTDASGYLGPQEAKAKVTLDPLITSIAIGRQF</sequence>
<gene>
    <name type="primary">nahQ</name>
</gene>
<protein>
    <recommendedName>
        <fullName>Dibenzothiophene metabolism operon protein NahQ/DoxH</fullName>
    </recommendedName>
</protein>
<proteinExistence type="predicted"/>
<feature type="chain" id="PRO_0000096708" description="Dibenzothiophene metabolism operon protein NahQ/DoxH">
    <location>
        <begin position="1" status="less than"/>
        <end position="52"/>
    </location>
</feature>
<feature type="non-terminal residue">
    <location>
        <position position="1"/>
    </location>
</feature>